<evidence type="ECO:0000255" key="1">
    <source>
        <dbReference type="HAMAP-Rule" id="MF_00009"/>
    </source>
</evidence>
<organism>
    <name type="scientific">Actinobacillus succinogenes (strain ATCC 55618 / DSM 22257 / CCUG 43843 / 130Z)</name>
    <dbReference type="NCBI Taxonomy" id="339671"/>
    <lineage>
        <taxon>Bacteria</taxon>
        <taxon>Pseudomonadati</taxon>
        <taxon>Pseudomonadota</taxon>
        <taxon>Gammaproteobacteria</taxon>
        <taxon>Pasteurellales</taxon>
        <taxon>Pasteurellaceae</taxon>
        <taxon>Actinobacillus</taxon>
    </lineage>
</organism>
<dbReference type="EC" id="3.1.-.-" evidence="1"/>
<dbReference type="EMBL" id="CP000746">
    <property type="protein sequence ID" value="ABR75293.1"/>
    <property type="molecule type" value="Genomic_DNA"/>
</dbReference>
<dbReference type="SMR" id="A6VQP6"/>
<dbReference type="STRING" id="339671.Asuc_1945"/>
<dbReference type="KEGG" id="asu:Asuc_1945"/>
<dbReference type="eggNOG" id="COG0319">
    <property type="taxonomic scope" value="Bacteria"/>
</dbReference>
<dbReference type="HOGENOM" id="CLU_106710_0_1_6"/>
<dbReference type="Proteomes" id="UP000001114">
    <property type="component" value="Chromosome"/>
</dbReference>
<dbReference type="GO" id="GO:0005737">
    <property type="term" value="C:cytoplasm"/>
    <property type="evidence" value="ECO:0007669"/>
    <property type="project" value="UniProtKB-SubCell"/>
</dbReference>
<dbReference type="GO" id="GO:0004222">
    <property type="term" value="F:metalloendopeptidase activity"/>
    <property type="evidence" value="ECO:0007669"/>
    <property type="project" value="InterPro"/>
</dbReference>
<dbReference type="GO" id="GO:0004521">
    <property type="term" value="F:RNA endonuclease activity"/>
    <property type="evidence" value="ECO:0007669"/>
    <property type="project" value="UniProtKB-UniRule"/>
</dbReference>
<dbReference type="GO" id="GO:0008270">
    <property type="term" value="F:zinc ion binding"/>
    <property type="evidence" value="ECO:0007669"/>
    <property type="project" value="UniProtKB-UniRule"/>
</dbReference>
<dbReference type="GO" id="GO:0006364">
    <property type="term" value="P:rRNA processing"/>
    <property type="evidence" value="ECO:0007669"/>
    <property type="project" value="UniProtKB-UniRule"/>
</dbReference>
<dbReference type="Gene3D" id="3.40.390.30">
    <property type="entry name" value="Metalloproteases ('zincins'), catalytic domain"/>
    <property type="match status" value="1"/>
</dbReference>
<dbReference type="HAMAP" id="MF_00009">
    <property type="entry name" value="Endoribonucl_YbeY"/>
    <property type="match status" value="1"/>
</dbReference>
<dbReference type="InterPro" id="IPR023091">
    <property type="entry name" value="MetalPrtase_cat_dom_sf_prd"/>
</dbReference>
<dbReference type="InterPro" id="IPR002036">
    <property type="entry name" value="YbeY"/>
</dbReference>
<dbReference type="InterPro" id="IPR020549">
    <property type="entry name" value="YbeY_CS"/>
</dbReference>
<dbReference type="NCBIfam" id="TIGR00043">
    <property type="entry name" value="rRNA maturation RNase YbeY"/>
    <property type="match status" value="1"/>
</dbReference>
<dbReference type="PANTHER" id="PTHR46986">
    <property type="entry name" value="ENDORIBONUCLEASE YBEY, CHLOROPLASTIC"/>
    <property type="match status" value="1"/>
</dbReference>
<dbReference type="PANTHER" id="PTHR46986:SF1">
    <property type="entry name" value="ENDORIBONUCLEASE YBEY, CHLOROPLASTIC"/>
    <property type="match status" value="1"/>
</dbReference>
<dbReference type="Pfam" id="PF02130">
    <property type="entry name" value="YbeY"/>
    <property type="match status" value="1"/>
</dbReference>
<dbReference type="SUPFAM" id="SSF55486">
    <property type="entry name" value="Metalloproteases ('zincins'), catalytic domain"/>
    <property type="match status" value="1"/>
</dbReference>
<dbReference type="PROSITE" id="PS01306">
    <property type="entry name" value="UPF0054"/>
    <property type="match status" value="1"/>
</dbReference>
<comment type="function">
    <text evidence="1">Single strand-specific metallo-endoribonuclease involved in late-stage 70S ribosome quality control and in maturation of the 3' terminus of the 16S rRNA.</text>
</comment>
<comment type="cofactor">
    <cofactor evidence="1">
        <name>Zn(2+)</name>
        <dbReference type="ChEBI" id="CHEBI:29105"/>
    </cofactor>
    <text evidence="1">Binds 1 zinc ion.</text>
</comment>
<comment type="subcellular location">
    <subcellularLocation>
        <location evidence="1">Cytoplasm</location>
    </subcellularLocation>
</comment>
<comment type="similarity">
    <text evidence="1">Belongs to the endoribonuclease YbeY family.</text>
</comment>
<name>YBEY_ACTSZ</name>
<accession>A6VQP6</accession>
<gene>
    <name evidence="1" type="primary">ybeY</name>
    <name type="ordered locus">Asuc_1945</name>
</gene>
<reference key="1">
    <citation type="journal article" date="2010" name="BMC Genomics">
        <title>A genomic perspective on the potential of Actinobacillus succinogenes for industrial succinate production.</title>
        <authorList>
            <person name="McKinlay J.B."/>
            <person name="Laivenieks M."/>
            <person name="Schindler B.D."/>
            <person name="McKinlay A.A."/>
            <person name="Siddaramappa S."/>
            <person name="Challacombe J.F."/>
            <person name="Lowry S.R."/>
            <person name="Clum A."/>
            <person name="Lapidus A.L."/>
            <person name="Burkhart K.B."/>
            <person name="Harkins V."/>
            <person name="Vieille C."/>
        </authorList>
    </citation>
    <scope>NUCLEOTIDE SEQUENCE [LARGE SCALE GENOMIC DNA]</scope>
    <source>
        <strain>ATCC 55618 / DSM 22257 / CCUG 43843 / 130Z</strain>
    </source>
</reference>
<keyword id="KW-0963">Cytoplasm</keyword>
<keyword id="KW-0255">Endonuclease</keyword>
<keyword id="KW-0378">Hydrolase</keyword>
<keyword id="KW-0479">Metal-binding</keyword>
<keyword id="KW-0540">Nuclease</keyword>
<keyword id="KW-1185">Reference proteome</keyword>
<keyword id="KW-0690">Ribosome biogenesis</keyword>
<keyword id="KW-0698">rRNA processing</keyword>
<keyword id="KW-0862">Zinc</keyword>
<sequence>MMKGVIIDLQIVSEDQTNLPTPEQFTQWATAAVRAEALEPEITIRIVDEAESHDLNLTYRGKDRPTNVLSFPFECPEEVELPLLGDLVICRQVVEREAEQQGKPLPAHWAHMVVHGCLHLLGYDHIEDDEAVEMESLETQIMTELGFEDPYSYDEI</sequence>
<proteinExistence type="inferred from homology"/>
<protein>
    <recommendedName>
        <fullName evidence="1">Endoribonuclease YbeY</fullName>
        <ecNumber evidence="1">3.1.-.-</ecNumber>
    </recommendedName>
</protein>
<feature type="chain" id="PRO_1000070929" description="Endoribonuclease YbeY">
    <location>
        <begin position="1"/>
        <end position="156"/>
    </location>
</feature>
<feature type="binding site" evidence="1">
    <location>
        <position position="115"/>
    </location>
    <ligand>
        <name>Zn(2+)</name>
        <dbReference type="ChEBI" id="CHEBI:29105"/>
        <note>catalytic</note>
    </ligand>
</feature>
<feature type="binding site" evidence="1">
    <location>
        <position position="119"/>
    </location>
    <ligand>
        <name>Zn(2+)</name>
        <dbReference type="ChEBI" id="CHEBI:29105"/>
        <note>catalytic</note>
    </ligand>
</feature>
<feature type="binding site" evidence="1">
    <location>
        <position position="125"/>
    </location>
    <ligand>
        <name>Zn(2+)</name>
        <dbReference type="ChEBI" id="CHEBI:29105"/>
        <note>catalytic</note>
    </ligand>
</feature>